<accession>P75358</accession>
<sequence length="337" mass="36806">MLAKSKTIRVAINGFGRIGRLVFRALLSQKNIEIVAVNDLTHPDTLAHLLKYDSAHGEFKKKVVAKDNTLMIDKKKVLVFSEKDPANLPWAEHNIDIVVESTGRFVSEEGASLHLQAGAKRVIISAPAKQKTIKTVVYNVNHKIINAEDKIISAASCTTNCLAPMVHVLEKNFGILHGTMVTVHAYTADQRLQDAPHSDLRRARAAACNIVPTTTGAAKAIGLVVPEATGKLNGMALRVPVLTGSIVELCVALEKDATVEQINQAMKKAASASFRYCEDEIVSSDIVGSEHGSIFDSKLTNIIEVDGNKLYKVYAWYDNESSYVNQLVRVVNYCAKL</sequence>
<gene>
    <name type="primary">gapA</name>
    <name type="synonym">gap</name>
    <name type="ordered locus">MPN_430</name>
    <name type="ORF">MP411</name>
</gene>
<organism>
    <name type="scientific">Mycoplasma pneumoniae (strain ATCC 29342 / M129 / Subtype 1)</name>
    <name type="common">Mycoplasmoides pneumoniae</name>
    <dbReference type="NCBI Taxonomy" id="272634"/>
    <lineage>
        <taxon>Bacteria</taxon>
        <taxon>Bacillati</taxon>
        <taxon>Mycoplasmatota</taxon>
        <taxon>Mycoplasmoidales</taxon>
        <taxon>Mycoplasmoidaceae</taxon>
        <taxon>Mycoplasmoides</taxon>
    </lineage>
</organism>
<comment type="function">
    <text evidence="3">Catalyzes the oxidative phosphorylation of glyceraldehyde 3-phosphate (G3P) to 1,3-bisphosphoglycerate (BPG) using the cofactor NAD. The first reaction step involves the formation of a hemiacetal intermediate between G3P and a cysteine residue, and this hemiacetal intermediate is then oxidized to a thioester, with concomitant reduction of NAD to NADH. The reduced NADH is then exchanged with the second NAD, and the thioester is attacked by a nucleophilic inorganic phosphate to produce BPG.</text>
</comment>
<comment type="catalytic activity">
    <reaction evidence="3">
        <text>D-glyceraldehyde 3-phosphate + phosphate + NAD(+) = (2R)-3-phospho-glyceroyl phosphate + NADH + H(+)</text>
        <dbReference type="Rhea" id="RHEA:10300"/>
        <dbReference type="ChEBI" id="CHEBI:15378"/>
        <dbReference type="ChEBI" id="CHEBI:43474"/>
        <dbReference type="ChEBI" id="CHEBI:57540"/>
        <dbReference type="ChEBI" id="CHEBI:57604"/>
        <dbReference type="ChEBI" id="CHEBI:57945"/>
        <dbReference type="ChEBI" id="CHEBI:59776"/>
        <dbReference type="EC" id="1.2.1.12"/>
    </reaction>
</comment>
<comment type="pathway">
    <text evidence="4">Carbohydrate degradation; glycolysis; pyruvate from D-glyceraldehyde 3-phosphate: step 1/5.</text>
</comment>
<comment type="subunit">
    <text evidence="2">Homotetramer.</text>
</comment>
<comment type="interaction">
    <interactant intactId="EBI-2259469">
        <id>P75358</id>
    </interactant>
    <interactant intactId="EBI-1034422">
        <id>P02679</id>
        <label>FGG</label>
    </interactant>
    <organismsDiffer>true</organismsDiffer>
    <experiments>2</experiments>
</comment>
<comment type="interaction">
    <interactant intactId="EBI-2259469">
        <id>P75358</id>
    </interactant>
    <interactant intactId="EBI-1220319">
        <id>P02751</id>
        <label>FN1</label>
    </interactant>
    <organismsDiffer>true</organismsDiffer>
    <experiments>3</experiments>
</comment>
<comment type="interaction">
    <interactant intactId="EBI-2259469">
        <id>P75358</id>
    </interactant>
    <interactant intactId="EBI-1058602">
        <id>P02788</id>
        <label>LTF</label>
    </interactant>
    <organismsDiffer>true</organismsDiffer>
    <experiments>3</experiments>
</comment>
<comment type="interaction">
    <interactant intactId="EBI-2259469">
        <id>P75358</id>
    </interactant>
    <interactant intactId="EBI-1036653">
        <id>P04004</id>
        <label>VTN</label>
    </interactant>
    <organismsDiffer>true</organismsDiffer>
    <experiments>3</experiments>
</comment>
<comment type="subcellular location">
    <subcellularLocation>
        <location evidence="4">Cytoplasm</location>
    </subcellularLocation>
</comment>
<comment type="similarity">
    <text evidence="4">Belongs to the glyceraldehyde-3-phosphate dehydrogenase family.</text>
</comment>
<feature type="chain" id="PRO_0000145670" description="Glyceraldehyde-3-phosphate dehydrogenase">
    <location>
        <begin position="1"/>
        <end position="337"/>
    </location>
</feature>
<feature type="active site" description="Nucleophile" evidence="1">
    <location>
        <position position="157"/>
    </location>
</feature>
<feature type="binding site" evidence="1">
    <location>
        <begin position="17"/>
        <end position="18"/>
    </location>
    <ligand>
        <name>NAD(+)</name>
        <dbReference type="ChEBI" id="CHEBI:57540"/>
    </ligand>
</feature>
<feature type="binding site" evidence="1">
    <location>
        <position position="39"/>
    </location>
    <ligand>
        <name>NAD(+)</name>
        <dbReference type="ChEBI" id="CHEBI:57540"/>
    </ligand>
</feature>
<feature type="binding site" evidence="1">
    <location>
        <position position="83"/>
    </location>
    <ligand>
        <name>NAD(+)</name>
        <dbReference type="ChEBI" id="CHEBI:57540"/>
    </ligand>
</feature>
<feature type="binding site" evidence="1">
    <location>
        <position position="125"/>
    </location>
    <ligand>
        <name>NAD(+)</name>
        <dbReference type="ChEBI" id="CHEBI:57540"/>
    </ligand>
</feature>
<feature type="binding site" evidence="1">
    <location>
        <begin position="156"/>
        <end position="158"/>
    </location>
    <ligand>
        <name>D-glyceraldehyde 3-phosphate</name>
        <dbReference type="ChEBI" id="CHEBI:59776"/>
    </ligand>
</feature>
<feature type="binding site" evidence="1">
    <location>
        <position position="187"/>
    </location>
    <ligand>
        <name>D-glyceraldehyde 3-phosphate</name>
        <dbReference type="ChEBI" id="CHEBI:59776"/>
    </ligand>
</feature>
<feature type="binding site" evidence="1">
    <location>
        <position position="202"/>
    </location>
    <ligand>
        <name>D-glyceraldehyde 3-phosphate</name>
        <dbReference type="ChEBI" id="CHEBI:59776"/>
    </ligand>
</feature>
<feature type="binding site" evidence="1">
    <location>
        <begin position="215"/>
        <end position="216"/>
    </location>
    <ligand>
        <name>D-glyceraldehyde 3-phosphate</name>
        <dbReference type="ChEBI" id="CHEBI:59776"/>
    </ligand>
</feature>
<feature type="binding site" evidence="1">
    <location>
        <position position="238"/>
    </location>
    <ligand>
        <name>D-glyceraldehyde 3-phosphate</name>
        <dbReference type="ChEBI" id="CHEBI:59776"/>
    </ligand>
</feature>
<feature type="binding site" evidence="1">
    <location>
        <position position="319"/>
    </location>
    <ligand>
        <name>NAD(+)</name>
        <dbReference type="ChEBI" id="CHEBI:57540"/>
    </ligand>
</feature>
<feature type="site" description="Activates thiol group during catalysis" evidence="1">
    <location>
        <position position="184"/>
    </location>
</feature>
<reference key="1">
    <citation type="journal article" date="1996" name="Nucleic Acids Res.">
        <title>Complete sequence analysis of the genome of the bacterium Mycoplasma pneumoniae.</title>
        <authorList>
            <person name="Himmelreich R."/>
            <person name="Hilbert H."/>
            <person name="Plagens H."/>
            <person name="Pirkl E."/>
            <person name="Li B.-C."/>
            <person name="Herrmann R."/>
        </authorList>
    </citation>
    <scope>NUCLEOTIDE SEQUENCE [LARGE SCALE GENOMIC DNA]</scope>
    <source>
        <strain>ATCC 29342 / M129 / Subtype 1</strain>
    </source>
</reference>
<proteinExistence type="evidence at protein level"/>
<protein>
    <recommendedName>
        <fullName evidence="3">Glyceraldehyde-3-phosphate dehydrogenase</fullName>
        <shortName evidence="3">GAPDH</shortName>
        <ecNumber evidence="3">1.2.1.12</ecNumber>
    </recommendedName>
    <alternativeName>
        <fullName evidence="3">NAD-dependent glyceraldehyde-3-phosphate dehydrogenase</fullName>
    </alternativeName>
</protein>
<name>G3P_MYCPN</name>
<dbReference type="EC" id="1.2.1.12" evidence="3"/>
<dbReference type="EMBL" id="U00089">
    <property type="protein sequence ID" value="AAB96059.1"/>
    <property type="molecule type" value="Genomic_DNA"/>
</dbReference>
<dbReference type="PIR" id="S73737">
    <property type="entry name" value="S73737"/>
</dbReference>
<dbReference type="RefSeq" id="NP_110118.1">
    <property type="nucleotide sequence ID" value="NC_000912.1"/>
</dbReference>
<dbReference type="RefSeq" id="WP_010874786.1">
    <property type="nucleotide sequence ID" value="NZ_OU342337.1"/>
</dbReference>
<dbReference type="SMR" id="P75358"/>
<dbReference type="IntAct" id="P75358">
    <property type="interactions" value="12"/>
</dbReference>
<dbReference type="STRING" id="272634.MPN_430"/>
<dbReference type="EnsemblBacteria" id="AAB96059">
    <property type="protein sequence ID" value="AAB96059"/>
    <property type="gene ID" value="MPN_430"/>
</dbReference>
<dbReference type="GeneID" id="66608903"/>
<dbReference type="KEGG" id="mpn:MPN_430"/>
<dbReference type="PATRIC" id="fig|272634.6.peg.465"/>
<dbReference type="HOGENOM" id="CLU_030140_0_2_14"/>
<dbReference type="OrthoDB" id="9803304at2"/>
<dbReference type="BioCyc" id="MetaCyc:MONOMER-548"/>
<dbReference type="BioCyc" id="MPNE272634:G1GJ3-695-MONOMER"/>
<dbReference type="UniPathway" id="UPA00109">
    <property type="reaction ID" value="UER00184"/>
</dbReference>
<dbReference type="Proteomes" id="UP000000808">
    <property type="component" value="Chromosome"/>
</dbReference>
<dbReference type="GO" id="GO:0005737">
    <property type="term" value="C:cytoplasm"/>
    <property type="evidence" value="ECO:0007669"/>
    <property type="project" value="UniProtKB-SubCell"/>
</dbReference>
<dbReference type="GO" id="GO:0016020">
    <property type="term" value="C:membrane"/>
    <property type="evidence" value="ECO:0000314"/>
    <property type="project" value="AgBase"/>
</dbReference>
<dbReference type="GO" id="GO:0004365">
    <property type="term" value="F:glyceraldehyde-3-phosphate dehydrogenase (NAD+) (phosphorylating) activity"/>
    <property type="evidence" value="ECO:0007669"/>
    <property type="project" value="UniProtKB-EC"/>
</dbReference>
<dbReference type="GO" id="GO:0051287">
    <property type="term" value="F:NAD binding"/>
    <property type="evidence" value="ECO:0007669"/>
    <property type="project" value="InterPro"/>
</dbReference>
<dbReference type="GO" id="GO:0050661">
    <property type="term" value="F:NADP binding"/>
    <property type="evidence" value="ECO:0007669"/>
    <property type="project" value="InterPro"/>
</dbReference>
<dbReference type="GO" id="GO:0006006">
    <property type="term" value="P:glucose metabolic process"/>
    <property type="evidence" value="ECO:0007669"/>
    <property type="project" value="InterPro"/>
</dbReference>
<dbReference type="GO" id="GO:0006096">
    <property type="term" value="P:glycolytic process"/>
    <property type="evidence" value="ECO:0007669"/>
    <property type="project" value="UniProtKB-UniPathway"/>
</dbReference>
<dbReference type="GO" id="GO:0031639">
    <property type="term" value="P:plasminogen activation"/>
    <property type="evidence" value="ECO:0000314"/>
    <property type="project" value="AgBase"/>
</dbReference>
<dbReference type="GO" id="GO:0034394">
    <property type="term" value="P:protein localization to cell surface"/>
    <property type="evidence" value="ECO:0000314"/>
    <property type="project" value="AgBase"/>
</dbReference>
<dbReference type="CDD" id="cd18126">
    <property type="entry name" value="GAPDH_I_C"/>
    <property type="match status" value="1"/>
</dbReference>
<dbReference type="CDD" id="cd05214">
    <property type="entry name" value="GAPDH_I_N"/>
    <property type="match status" value="1"/>
</dbReference>
<dbReference type="FunFam" id="3.30.360.10:FF:000002">
    <property type="entry name" value="Glyceraldehyde-3-phosphate dehydrogenase"/>
    <property type="match status" value="1"/>
</dbReference>
<dbReference type="FunFam" id="3.40.50.720:FF:000001">
    <property type="entry name" value="Glyceraldehyde-3-phosphate dehydrogenase"/>
    <property type="match status" value="1"/>
</dbReference>
<dbReference type="Gene3D" id="3.30.360.10">
    <property type="entry name" value="Dihydrodipicolinate Reductase, domain 2"/>
    <property type="match status" value="1"/>
</dbReference>
<dbReference type="Gene3D" id="3.40.50.720">
    <property type="entry name" value="NAD(P)-binding Rossmann-like Domain"/>
    <property type="match status" value="1"/>
</dbReference>
<dbReference type="InterPro" id="IPR020831">
    <property type="entry name" value="GlycerAld/Erythrose_P_DH"/>
</dbReference>
<dbReference type="InterPro" id="IPR020830">
    <property type="entry name" value="GlycerAld_3-P_DH_AS"/>
</dbReference>
<dbReference type="InterPro" id="IPR020829">
    <property type="entry name" value="GlycerAld_3-P_DH_cat"/>
</dbReference>
<dbReference type="InterPro" id="IPR020828">
    <property type="entry name" value="GlycerAld_3-P_DH_NAD(P)-bd"/>
</dbReference>
<dbReference type="InterPro" id="IPR006424">
    <property type="entry name" value="Glyceraldehyde-3-P_DH_1"/>
</dbReference>
<dbReference type="InterPro" id="IPR036291">
    <property type="entry name" value="NAD(P)-bd_dom_sf"/>
</dbReference>
<dbReference type="NCBIfam" id="TIGR01534">
    <property type="entry name" value="GAPDH-I"/>
    <property type="match status" value="1"/>
</dbReference>
<dbReference type="PANTHER" id="PTHR43148">
    <property type="entry name" value="GLYCERALDEHYDE-3-PHOSPHATE DEHYDROGENASE 2"/>
    <property type="match status" value="1"/>
</dbReference>
<dbReference type="Pfam" id="PF02800">
    <property type="entry name" value="Gp_dh_C"/>
    <property type="match status" value="1"/>
</dbReference>
<dbReference type="Pfam" id="PF00044">
    <property type="entry name" value="Gp_dh_N"/>
    <property type="match status" value="1"/>
</dbReference>
<dbReference type="PIRSF" id="PIRSF000149">
    <property type="entry name" value="GAP_DH"/>
    <property type="match status" value="1"/>
</dbReference>
<dbReference type="PRINTS" id="PR00078">
    <property type="entry name" value="G3PDHDRGNASE"/>
</dbReference>
<dbReference type="SMART" id="SM00846">
    <property type="entry name" value="Gp_dh_N"/>
    <property type="match status" value="1"/>
</dbReference>
<dbReference type="SUPFAM" id="SSF55347">
    <property type="entry name" value="Glyceraldehyde-3-phosphate dehydrogenase-like, C-terminal domain"/>
    <property type="match status" value="1"/>
</dbReference>
<dbReference type="SUPFAM" id="SSF51735">
    <property type="entry name" value="NAD(P)-binding Rossmann-fold domains"/>
    <property type="match status" value="1"/>
</dbReference>
<dbReference type="PROSITE" id="PS00071">
    <property type="entry name" value="GAPDH"/>
    <property type="match status" value="1"/>
</dbReference>
<evidence type="ECO:0000250" key="1">
    <source>
        <dbReference type="UniProtKB" id="P00362"/>
    </source>
</evidence>
<evidence type="ECO:0000250" key="2">
    <source>
        <dbReference type="UniProtKB" id="P54226"/>
    </source>
</evidence>
<evidence type="ECO:0000250" key="3">
    <source>
        <dbReference type="UniProtKB" id="P9WN83"/>
    </source>
</evidence>
<evidence type="ECO:0000305" key="4"/>
<keyword id="KW-0963">Cytoplasm</keyword>
<keyword id="KW-0324">Glycolysis</keyword>
<keyword id="KW-0520">NAD</keyword>
<keyword id="KW-0547">Nucleotide-binding</keyword>
<keyword id="KW-0560">Oxidoreductase</keyword>
<keyword id="KW-1185">Reference proteome</keyword>